<comment type="function">
    <text evidence="5 6 7 10">Specifically recognizes and binds N6-methyladenosine (m6A)-containing RNAs, and regulates mRNA stability (Probable) (PubMed:29618631, PubMed:29716990). M6A is a modification present at internal sites of mRNAs and some non-coding RNAs and plays a role in mRNA stability and processing (Probable) (PubMed:29618631, PubMed:29716990). Binds preferentially in the 3'UTRs of target genes (PubMed:29716990). May play dual roles in regulating 3'UTR processing in the nucleus and facilitating mRNA stability in the cytoplasm (PubMed:29716990). Required for the correct timing of leaf formation and normal leaf morphology (PubMed:29643069). Functions redundantly with ECT3 (PubMed:29643069). Required for proper trichome branching and morphology (PubMed:29618631, PubMed:29643069, PubMed:29716990). Controls trichome morphology by binding transcripts related to trichome morphogenesis and affecting their stability (PubMed:29618631, PubMed:29716990).</text>
</comment>
<comment type="subunit">
    <text evidence="4">Interacts (via C-terminus) with CIPK1.</text>
</comment>
<comment type="subcellular location">
    <subcellularLocation>
        <location evidence="5 6">Cytoplasm</location>
    </subcellularLocation>
    <subcellularLocation>
        <location evidence="7">Nucleus</location>
    </subcellularLocation>
    <text evidence="5 6">Localizes to cytoplasmic foci upon drought stress (PubMed:29643069). Relocates to cytoplasmic stress granules upon heat stress (PubMed:29618631).</text>
</comment>
<comment type="tissue specificity">
    <text evidence="6 7">Expressed in the shoot apex, at the sites of leaf formation, and in emerging leaves (PubMed:29643069). Highly expressed in rapidly developing tissues (PubMed:29716990).</text>
</comment>
<comment type="disruption phenotype">
    <text evidence="6 7">Aberrant trichome branching with an increase in number of spikes (PubMed:29643069, PubMed:29716990). The double mutant plants ect2 and ect3 exhibit delayed timing of leaf formation and altered leaf morphology (PubMed:29643069).</text>
</comment>
<comment type="sequence caution" evidence="9">
    <conflict type="miscellaneous discrepancy">
        <sequence resource="EMBL-CDS" id="AAY44715"/>
    </conflict>
    <text>Sequencing errors.</text>
</comment>
<reference key="1">
    <citation type="journal article" date="2005" name="Plant Physiol.">
        <title>Novel CIPK1-associated proteins in Arabidopsis contain an evolutionarily conserved C-terminal region that mediates nuclear localization.</title>
        <authorList>
            <person name="Ok S.H."/>
            <person name="Jeong H.J."/>
            <person name="Bae J.M."/>
            <person name="Shin J.S."/>
            <person name="Luan S."/>
            <person name="Kim K.N."/>
        </authorList>
    </citation>
    <scope>NUCLEOTIDE SEQUENCE [MRNA]</scope>
    <scope>INTERACTION WITH CIPK1</scope>
    <source>
        <strain>cv. Columbia</strain>
    </source>
</reference>
<reference key="2">
    <citation type="journal article" date="2000" name="DNA Res.">
        <title>Structural analysis of Arabidopsis thaliana chromosome 3. II. Sequence features of the 4,251,695 bp regions covered by 90 P1, TAC and BAC clones.</title>
        <authorList>
            <person name="Kaneko T."/>
            <person name="Katoh T."/>
            <person name="Sato S."/>
            <person name="Nakamura Y."/>
            <person name="Asamizu E."/>
            <person name="Tabata S."/>
        </authorList>
    </citation>
    <scope>NUCLEOTIDE SEQUENCE [LARGE SCALE GENOMIC DNA]</scope>
    <source>
        <strain>cv. Columbia</strain>
    </source>
</reference>
<reference key="3">
    <citation type="journal article" date="2017" name="Plant J.">
        <title>Araport11: a complete reannotation of the Arabidopsis thaliana reference genome.</title>
        <authorList>
            <person name="Cheng C.Y."/>
            <person name="Krishnakumar V."/>
            <person name="Chan A.P."/>
            <person name="Thibaud-Nissen F."/>
            <person name="Schobel S."/>
            <person name="Town C.D."/>
        </authorList>
    </citation>
    <scope>GENOME REANNOTATION</scope>
    <source>
        <strain>cv. Columbia</strain>
    </source>
</reference>
<reference key="4">
    <citation type="journal article" date="2003" name="Science">
        <title>Empirical analysis of transcriptional activity in the Arabidopsis genome.</title>
        <authorList>
            <person name="Yamada K."/>
            <person name="Lim J."/>
            <person name="Dale J.M."/>
            <person name="Chen H."/>
            <person name="Shinn P."/>
            <person name="Palm C.J."/>
            <person name="Southwick A.M."/>
            <person name="Wu H.C."/>
            <person name="Kim C.J."/>
            <person name="Nguyen M."/>
            <person name="Pham P.K."/>
            <person name="Cheuk R.F."/>
            <person name="Karlin-Newmann G."/>
            <person name="Liu S.X."/>
            <person name="Lam B."/>
            <person name="Sakano H."/>
            <person name="Wu T."/>
            <person name="Yu G."/>
            <person name="Miranda M."/>
            <person name="Quach H.L."/>
            <person name="Tripp M."/>
            <person name="Chang C.H."/>
            <person name="Lee J.M."/>
            <person name="Toriumi M.J."/>
            <person name="Chan M.M."/>
            <person name="Tang C.C."/>
            <person name="Onodera C.S."/>
            <person name="Deng J.M."/>
            <person name="Akiyama K."/>
            <person name="Ansari Y."/>
            <person name="Arakawa T."/>
            <person name="Banh J."/>
            <person name="Banno F."/>
            <person name="Bowser L."/>
            <person name="Brooks S.Y."/>
            <person name="Carninci P."/>
            <person name="Chao Q."/>
            <person name="Choy N."/>
            <person name="Enju A."/>
            <person name="Goldsmith A.D."/>
            <person name="Gurjal M."/>
            <person name="Hansen N.F."/>
            <person name="Hayashizaki Y."/>
            <person name="Johnson-Hopson C."/>
            <person name="Hsuan V.W."/>
            <person name="Iida K."/>
            <person name="Karnes M."/>
            <person name="Khan S."/>
            <person name="Koesema E."/>
            <person name="Ishida J."/>
            <person name="Jiang P.X."/>
            <person name="Jones T."/>
            <person name="Kawai J."/>
            <person name="Kamiya A."/>
            <person name="Meyers C."/>
            <person name="Nakajima M."/>
            <person name="Narusaka M."/>
            <person name="Seki M."/>
            <person name="Sakurai T."/>
            <person name="Satou M."/>
            <person name="Tamse R."/>
            <person name="Vaysberg M."/>
            <person name="Wallender E.K."/>
            <person name="Wong C."/>
            <person name="Yamamura Y."/>
            <person name="Yuan S."/>
            <person name="Shinozaki K."/>
            <person name="Davis R.W."/>
            <person name="Theologis A."/>
            <person name="Ecker J.R."/>
        </authorList>
    </citation>
    <scope>NUCLEOTIDE SEQUENCE [LARGE SCALE MRNA]</scope>
    <source>
        <strain>cv. Columbia</strain>
    </source>
</reference>
<reference key="5">
    <citation type="submission" date="2006-07" db="EMBL/GenBank/DDBJ databases">
        <title>Large-scale analysis of RIKEN Arabidopsis full-length (RAFL) cDNAs.</title>
        <authorList>
            <person name="Totoki Y."/>
            <person name="Seki M."/>
            <person name="Ishida J."/>
            <person name="Nakajima M."/>
            <person name="Enju A."/>
            <person name="Kamiya A."/>
            <person name="Narusaka M."/>
            <person name="Shin-i T."/>
            <person name="Nakagawa M."/>
            <person name="Sakamoto N."/>
            <person name="Oishi K."/>
            <person name="Kohara Y."/>
            <person name="Kobayashi M."/>
            <person name="Toyoda A."/>
            <person name="Sakaki Y."/>
            <person name="Sakurai T."/>
            <person name="Iida K."/>
            <person name="Akiyama K."/>
            <person name="Satou M."/>
            <person name="Toyoda T."/>
            <person name="Konagaya A."/>
            <person name="Carninci P."/>
            <person name="Kawai J."/>
            <person name="Hayashizaki Y."/>
            <person name="Shinozaki K."/>
        </authorList>
    </citation>
    <scope>NUCLEOTIDE SEQUENCE [LARGE SCALE MRNA]</scope>
    <source>
        <strain>cv. Columbia</strain>
    </source>
</reference>
<reference key="6">
    <citation type="journal article" date="2009" name="Plant Physiol.">
        <title>Large-scale Arabidopsis phosphoproteome profiling reveals novel chloroplast kinase substrates and phosphorylation networks.</title>
        <authorList>
            <person name="Reiland S."/>
            <person name="Messerli G."/>
            <person name="Baerenfaller K."/>
            <person name="Gerrits B."/>
            <person name="Endler A."/>
            <person name="Grossmann J."/>
            <person name="Gruissem W."/>
            <person name="Baginsky S."/>
        </authorList>
    </citation>
    <scope>IDENTIFICATION BY MASS SPECTROMETRY [LARGE SCALE ANALYSIS]</scope>
</reference>
<reference key="7">
    <citation type="journal article" date="2012" name="Mol. Cell. Proteomics">
        <title>Comparative large-scale characterisation of plant vs. mammal proteins reveals similar and idiosyncratic N-alpha acetylation features.</title>
        <authorList>
            <person name="Bienvenut W.V."/>
            <person name="Sumpton D."/>
            <person name="Martinez A."/>
            <person name="Lilla S."/>
            <person name="Espagne C."/>
            <person name="Meinnel T."/>
            <person name="Giglione C."/>
        </authorList>
    </citation>
    <scope>IDENTIFICATION BY MASS SPECTROMETRY [LARGE SCALE ANALYSIS]</scope>
</reference>
<reference key="8">
    <citation type="journal article" date="2018" name="Plant Cell">
        <title>An m6A-YTH module controls developmental timing and morphogenesis in Arabidopsis.</title>
        <authorList>
            <person name="Arribas-Hernandez L."/>
            <person name="Bressendorff S."/>
            <person name="Hansen M.H."/>
            <person name="Poulsen C."/>
            <person name="Erdmann S."/>
            <person name="Brodersen P."/>
        </authorList>
    </citation>
    <scope>FUNCTION</scope>
    <scope>SUBCELLULAR LOCATION</scope>
    <scope>BINDING TO N6-METHYLADENOSINE (M6A)-CONTAINING RNA</scope>
    <scope>TISSUE SPECIFICITY</scope>
    <scope>MUTAGENESIS OF TRP-464</scope>
    <scope>DISRUPTION PHENOTYPE</scope>
</reference>
<reference key="9">
    <citation type="journal article" date="2018" name="Plant Cell">
        <title>The m6A reader ECT2 controls trichome morphology by affecting mRNA stability in Arabidopsis.</title>
        <authorList>
            <person name="Wei L.H."/>
            <person name="Song P."/>
            <person name="Wang Y."/>
            <person name="Lu Z."/>
            <person name="Tang Q."/>
            <person name="Yu Q."/>
            <person name="Xiao Y."/>
            <person name="Zhang X."/>
            <person name="Duan H.C."/>
            <person name="Jia G."/>
        </authorList>
    </citation>
    <scope>FUNCTION</scope>
    <scope>SUBCELLULAR LOCATION</scope>
    <scope>BINDING TO N6-METHYLADENOSINE (M6A)-CONTAINING RNA</scope>
    <scope>TISSUE SPECIFICITY</scope>
    <scope>MUTAGENESIS OF TRP-521 AND TRP-534</scope>
</reference>
<reference key="10">
    <citation type="journal article" date="2018" name="Plant Cell">
        <title>The YTH domain protein ECT2 is an m6A reader required for normal trichome branching in Arabidopsis.</title>
        <authorList>
            <person name="Scutenaire J."/>
            <person name="Deragon J.M."/>
            <person name="Jean V."/>
            <person name="Benhamed M."/>
            <person name="Raynaud C."/>
            <person name="Favory J.J."/>
            <person name="Merret R."/>
            <person name="Bousquet-Antonelli C."/>
        </authorList>
    </citation>
    <scope>FUNCTION</scope>
    <scope>SUBCELLULAR LOCATION</scope>
    <scope>BINDING TO N6-METHYLADENOSINE (M6A)-CONTAINING RNA</scope>
    <scope>MUTAGENESIS OF TRP-464; TRP-521 AND TRP-526</scope>
</reference>
<name>ECT2_ARATH</name>
<dbReference type="EMBL" id="AY894118">
    <property type="protein sequence ID" value="AAY44715.1"/>
    <property type="status" value="ALT_SEQ"/>
    <property type="molecule type" value="mRNA"/>
</dbReference>
<dbReference type="EMBL" id="AP000603">
    <property type="protein sequence ID" value="BAB01753.1"/>
    <property type="molecule type" value="Genomic_DNA"/>
</dbReference>
<dbReference type="EMBL" id="CP002686">
    <property type="protein sequence ID" value="AEE75358.1"/>
    <property type="molecule type" value="Genomic_DNA"/>
</dbReference>
<dbReference type="EMBL" id="AY123992">
    <property type="protein sequence ID" value="AAM74503.1"/>
    <property type="molecule type" value="mRNA"/>
</dbReference>
<dbReference type="EMBL" id="BT002179">
    <property type="protein sequence ID" value="AAN72190.1"/>
    <property type="molecule type" value="mRNA"/>
</dbReference>
<dbReference type="EMBL" id="AK227250">
    <property type="protein sequence ID" value="BAE99285.1"/>
    <property type="molecule type" value="mRNA"/>
</dbReference>
<dbReference type="RefSeq" id="NP_187955.2">
    <property type="nucleotide sequence ID" value="NM_112192.5"/>
</dbReference>
<dbReference type="SMR" id="Q9LJE5"/>
<dbReference type="FunCoup" id="Q9LJE5">
    <property type="interactions" value="2728"/>
</dbReference>
<dbReference type="IntAct" id="Q9LJE5">
    <property type="interactions" value="1"/>
</dbReference>
<dbReference type="STRING" id="3702.Q9LJE5"/>
<dbReference type="GlyGen" id="Q9LJE5">
    <property type="glycosylation" value="7 sites, 1 O-linked glycan (7 sites)"/>
</dbReference>
<dbReference type="iPTMnet" id="Q9LJE5"/>
<dbReference type="PaxDb" id="3702-AT3G13460.1"/>
<dbReference type="ProteomicsDB" id="222056"/>
<dbReference type="EnsemblPlants" id="AT3G13460.1">
    <property type="protein sequence ID" value="AT3G13460.1"/>
    <property type="gene ID" value="AT3G13460"/>
</dbReference>
<dbReference type="GeneID" id="820548"/>
<dbReference type="Gramene" id="AT3G13460.1">
    <property type="protein sequence ID" value="AT3G13460.1"/>
    <property type="gene ID" value="AT3G13460"/>
</dbReference>
<dbReference type="KEGG" id="ath:AT3G13460"/>
<dbReference type="Araport" id="AT3G13460"/>
<dbReference type="TAIR" id="AT3G13460">
    <property type="gene designation" value="ECT2"/>
</dbReference>
<dbReference type="eggNOG" id="KOG1901">
    <property type="taxonomic scope" value="Eukaryota"/>
</dbReference>
<dbReference type="HOGENOM" id="CLU_017795_5_1_1"/>
<dbReference type="InParanoid" id="Q9LJE5"/>
<dbReference type="OrthoDB" id="306690at2759"/>
<dbReference type="PhylomeDB" id="Q9LJE5"/>
<dbReference type="PRO" id="PR:Q9LJE5"/>
<dbReference type="Proteomes" id="UP000006548">
    <property type="component" value="Chromosome 3"/>
</dbReference>
<dbReference type="ExpressionAtlas" id="Q9LJE5">
    <property type="expression patterns" value="baseline and differential"/>
</dbReference>
<dbReference type="GO" id="GO:0005737">
    <property type="term" value="C:cytoplasm"/>
    <property type="evidence" value="ECO:0000314"/>
    <property type="project" value="TAIR"/>
</dbReference>
<dbReference type="GO" id="GO:0005829">
    <property type="term" value="C:cytosol"/>
    <property type="evidence" value="ECO:0007005"/>
    <property type="project" value="TAIR"/>
</dbReference>
<dbReference type="GO" id="GO:0005634">
    <property type="term" value="C:nucleus"/>
    <property type="evidence" value="ECO:0000314"/>
    <property type="project" value="TAIR"/>
</dbReference>
<dbReference type="GO" id="GO:0003729">
    <property type="term" value="F:mRNA binding"/>
    <property type="evidence" value="ECO:0000314"/>
    <property type="project" value="TAIR"/>
</dbReference>
<dbReference type="CDD" id="cd21134">
    <property type="entry name" value="YTH"/>
    <property type="match status" value="1"/>
</dbReference>
<dbReference type="FunFam" id="3.10.590.10:FF:000001">
    <property type="entry name" value="YTH domain family 1, isoform CRA_a"/>
    <property type="match status" value="1"/>
</dbReference>
<dbReference type="Gene3D" id="3.10.590.10">
    <property type="entry name" value="ph1033 like domains"/>
    <property type="match status" value="1"/>
</dbReference>
<dbReference type="InterPro" id="IPR007275">
    <property type="entry name" value="YTH_domain"/>
</dbReference>
<dbReference type="InterPro" id="IPR045168">
    <property type="entry name" value="YTH_prot"/>
</dbReference>
<dbReference type="PANTHER" id="PTHR12357:SF99">
    <property type="entry name" value="YTH DOMAIN-CONTAINING PROTEIN ECT2-RELATED"/>
    <property type="match status" value="1"/>
</dbReference>
<dbReference type="PANTHER" id="PTHR12357">
    <property type="entry name" value="YTH YT521-B HOMOLOGY DOMAIN-CONTAINING"/>
    <property type="match status" value="1"/>
</dbReference>
<dbReference type="Pfam" id="PF04146">
    <property type="entry name" value="YTH"/>
    <property type="match status" value="1"/>
</dbReference>
<dbReference type="PROSITE" id="PS50882">
    <property type="entry name" value="YTH"/>
    <property type="match status" value="1"/>
</dbReference>
<gene>
    <name evidence="8" type="primary">ECT2</name>
    <name evidence="11" type="ordered locus">At3g13460</name>
    <name evidence="12" type="ORF">MRP15.12</name>
</gene>
<accession>Q9LJE5</accession>
<accession>A0A178VBC2</accession>
<accession>Q3MK93</accession>
<accession>Q8H0S7</accession>
<proteinExistence type="evidence at protein level"/>
<evidence type="ECO:0000250" key="1">
    <source>
        <dbReference type="UniProtKB" id="Q9Y5A9"/>
    </source>
</evidence>
<evidence type="ECO:0000255" key="2">
    <source>
        <dbReference type="PROSITE-ProRule" id="PRU00225"/>
    </source>
</evidence>
<evidence type="ECO:0000256" key="3">
    <source>
        <dbReference type="SAM" id="MobiDB-lite"/>
    </source>
</evidence>
<evidence type="ECO:0000269" key="4">
    <source>
    </source>
</evidence>
<evidence type="ECO:0000269" key="5">
    <source>
    </source>
</evidence>
<evidence type="ECO:0000269" key="6">
    <source>
    </source>
</evidence>
<evidence type="ECO:0000269" key="7">
    <source>
    </source>
</evidence>
<evidence type="ECO:0000303" key="8">
    <source>
    </source>
</evidence>
<evidence type="ECO:0000305" key="9"/>
<evidence type="ECO:0000305" key="10">
    <source>
    </source>
</evidence>
<evidence type="ECO:0000312" key="11">
    <source>
        <dbReference type="Araport" id="AT3G13460"/>
    </source>
</evidence>
<evidence type="ECO:0000312" key="12">
    <source>
        <dbReference type="EMBL" id="BAB01753.1"/>
    </source>
</evidence>
<keyword id="KW-0963">Cytoplasm</keyword>
<keyword id="KW-0539">Nucleus</keyword>
<keyword id="KW-1185">Reference proteome</keyword>
<keyword id="KW-0694">RNA-binding</keyword>
<feature type="chain" id="PRO_0000445524" description="YTH domain-containing protein ECT2">
    <location>
        <begin position="1"/>
        <end position="667"/>
    </location>
</feature>
<feature type="domain" description="YTH" evidence="2">
    <location>
        <begin position="442"/>
        <end position="579"/>
    </location>
</feature>
<feature type="region of interest" description="Disordered" evidence="3">
    <location>
        <begin position="264"/>
        <end position="305"/>
    </location>
</feature>
<feature type="region of interest" description="Disordered" evidence="3">
    <location>
        <begin position="379"/>
        <end position="398"/>
    </location>
</feature>
<feature type="region of interest" description="Disordered" evidence="3">
    <location>
        <begin position="606"/>
        <end position="667"/>
    </location>
</feature>
<feature type="compositionally biased region" description="Low complexity" evidence="3">
    <location>
        <begin position="267"/>
        <end position="285"/>
    </location>
</feature>
<feature type="compositionally biased region" description="Polar residues" evidence="3">
    <location>
        <begin position="286"/>
        <end position="305"/>
    </location>
</feature>
<feature type="compositionally biased region" description="Basic and acidic residues" evidence="3">
    <location>
        <begin position="614"/>
        <end position="627"/>
    </location>
</feature>
<feature type="compositionally biased region" description="Low complexity" evidence="3">
    <location>
        <begin position="628"/>
        <end position="639"/>
    </location>
</feature>
<feature type="binding site" evidence="1">
    <location>
        <begin position="448"/>
        <end position="450"/>
    </location>
    <ligand>
        <name>RNA</name>
        <dbReference type="ChEBI" id="CHEBI:33697"/>
    </ligand>
    <ligandPart>
        <name>N(6)-methyladenosine 5'-phosphate residue</name>
        <dbReference type="ChEBI" id="CHEBI:74449"/>
    </ligandPart>
</feature>
<feature type="binding site" evidence="1">
    <location>
        <position position="454"/>
    </location>
    <ligand>
        <name>RNA</name>
        <dbReference type="ChEBI" id="CHEBI:33697"/>
    </ligand>
    <ligandPart>
        <name>N(6)-methyladenosine 5'-phosphate residue</name>
        <dbReference type="ChEBI" id="CHEBI:74449"/>
    </ligandPart>
</feature>
<feature type="binding site" evidence="5 6">
    <location>
        <begin position="464"/>
        <end position="465"/>
    </location>
    <ligand>
        <name>RNA</name>
        <dbReference type="ChEBI" id="CHEBI:33697"/>
    </ligand>
    <ligandPart>
        <name>N(6)-methyladenosine 5'-phosphate residue</name>
        <dbReference type="ChEBI" id="CHEBI:74449"/>
    </ligandPart>
</feature>
<feature type="binding site" evidence="1">
    <location>
        <position position="497"/>
    </location>
    <ligand>
        <name>RNA</name>
        <dbReference type="ChEBI" id="CHEBI:33697"/>
    </ligand>
    <ligandPart>
        <name>N(6)-methyladenosine 5'-phosphate residue</name>
        <dbReference type="ChEBI" id="CHEBI:74449"/>
    </ligandPart>
</feature>
<feature type="binding site" evidence="5 7">
    <location>
        <position position="521"/>
    </location>
    <ligand>
        <name>RNA</name>
        <dbReference type="ChEBI" id="CHEBI:33697"/>
    </ligand>
    <ligandPart>
        <name>N(6)-methyladenosine 5'-phosphate residue</name>
        <dbReference type="ChEBI" id="CHEBI:74449"/>
    </ligandPart>
</feature>
<feature type="binding site" evidence="5">
    <location>
        <position position="526"/>
    </location>
    <ligand>
        <name>RNA</name>
        <dbReference type="ChEBI" id="CHEBI:33697"/>
    </ligand>
    <ligandPart>
        <name>N(6)-methyladenosine 5'-phosphate residue</name>
        <dbReference type="ChEBI" id="CHEBI:74449"/>
    </ligandPart>
</feature>
<feature type="binding site" evidence="7">
    <location>
        <position position="534"/>
    </location>
    <ligand>
        <name>RNA</name>
        <dbReference type="ChEBI" id="CHEBI:33697"/>
    </ligand>
    <ligandPart>
        <name>N(6)-methyladenosine 5'-phosphate residue</name>
        <dbReference type="ChEBI" id="CHEBI:74449"/>
    </ligandPart>
</feature>
<feature type="mutagenesis site" description="Reduces binding to N6-methyladenosine (m6A)-containing RNAs. Abolishes binding to N6-methyladenosine (m6A)-containing RNAs; when associated with A-521 and A-526." evidence="5 6">
    <original>W</original>
    <variation>A</variation>
    <location>
        <position position="464"/>
    </location>
</feature>
<feature type="mutagenesis site" description="Abolishes binding to N6-methyladenosine (m6A)-containing RNAs; when associated with A-534. Abolishes binding to N6-methyladenosine (m6A)-containing RNAs; when associated with A-464 and A-526." evidence="5 7">
    <original>W</original>
    <variation>A</variation>
    <location>
        <position position="521"/>
    </location>
</feature>
<feature type="mutagenesis site" description="Abolishes binding to N6-methyladenosine (m6A)-containing RNAs; when associated with A-464 and A-521." evidence="5">
    <original>W</original>
    <variation>A</variation>
    <location>
        <position position="526"/>
    </location>
</feature>
<feature type="mutagenesis site" description="Abolishes binding to N6-methyladenosine (m6A)-containing RNAs; when associated with A-521." evidence="7">
    <original>W</original>
    <variation>A</variation>
    <location>
        <position position="534"/>
    </location>
</feature>
<feature type="sequence conflict" description="In Ref. 4; AAN72190 and 5; BAE99285." evidence="9" ref="4 5">
    <original>G</original>
    <variation>A</variation>
    <location>
        <position position="199"/>
    </location>
</feature>
<feature type="sequence conflict" description="In Ref. 4; AAN72190 and 5; BAE99285." evidence="9" ref="4 5">
    <original>E</original>
    <variation>G</variation>
    <location>
        <position position="630"/>
    </location>
</feature>
<protein>
    <recommendedName>
        <fullName evidence="9">YTH domain-containing protein ECT2</fullName>
    </recommendedName>
    <alternativeName>
        <fullName evidence="8">Protein EVOLUTIONARILY CONSERVED C-TERMINAL REGION 2</fullName>
    </alternativeName>
</protein>
<sequence length="667" mass="72475">MATVAPPADQATDLLQKLSLDSPAKASEIPEPNKKTAVYQYGGVDVHGQVPSYDRSLTPMLPSDAADPSVCYVPNPYNPYQYYNVYGSGQEWTDYPAYTNPEGVDMNSGIYGENGTVVYPQGYGYAAYPYSPATSPAPQLGGEGQLYGAQQYQYPNYFPNSGPYASSVATPTQPDLSANKPAGVKTLPADSNNVASAAGITKGSNGSAPVKPTNQATLNTSSNLYGMGAPGGGLAAGYQDPRYAYEGYYAPVPWHDGSKYSDVQRPVSGSGVASSYSKSSTVPSSRNQNYRSNSHYTSVHQPSSVTGYGTAQGYYNRMYQNKLYGQYGSTGRSALGYGSSGYDSRTNGRGWAATDNKYRSWGRGNSYYYGNENNVDGLNELNRGPRAKGTKNQKGNLDDSLEVKEQTGESNVTEVGEADNTCVVPDREQYNKEDFPVDYANAMFFIIKSYSEDDVHKSIKYNVWASTPNGNKKLAAAYQEAQQKAGGCPIFLFFSVNASGQFVGLAEMTGPVDFNTNVEYWQQDKWTGSFPLKWHIVKDVPNSLLKHITLENNENKPVTNSRDTQEVKLEQGLKIVKIFKEHSSKTCILDDFSFYEVRQKTILEKKAKQTQKQVSEEKVTDEKKESATAESASKESPAAVQTSSDVKVAENGSVAKPVTGDVVANGC</sequence>
<organism>
    <name type="scientific">Arabidopsis thaliana</name>
    <name type="common">Mouse-ear cress</name>
    <dbReference type="NCBI Taxonomy" id="3702"/>
    <lineage>
        <taxon>Eukaryota</taxon>
        <taxon>Viridiplantae</taxon>
        <taxon>Streptophyta</taxon>
        <taxon>Embryophyta</taxon>
        <taxon>Tracheophyta</taxon>
        <taxon>Spermatophyta</taxon>
        <taxon>Magnoliopsida</taxon>
        <taxon>eudicotyledons</taxon>
        <taxon>Gunneridae</taxon>
        <taxon>Pentapetalae</taxon>
        <taxon>rosids</taxon>
        <taxon>malvids</taxon>
        <taxon>Brassicales</taxon>
        <taxon>Brassicaceae</taxon>
        <taxon>Camelineae</taxon>
        <taxon>Arabidopsis</taxon>
    </lineage>
</organism>